<name>RRP4_METS3</name>
<reference key="1">
    <citation type="journal article" date="2007" name="Proc. Natl. Acad. Sci. U.S.A.">
        <title>Genomic and metabolic adaptations of Methanobrevibacter smithii to the human gut.</title>
        <authorList>
            <person name="Samuel B.S."/>
            <person name="Hansen E.E."/>
            <person name="Manchester J.K."/>
            <person name="Coutinho P.M."/>
            <person name="Henrissat B."/>
            <person name="Fulton R."/>
            <person name="Latreille P."/>
            <person name="Kim K."/>
            <person name="Wilson R.K."/>
            <person name="Gordon J.I."/>
        </authorList>
    </citation>
    <scope>NUCLEOTIDE SEQUENCE [LARGE SCALE GENOMIC DNA]</scope>
    <source>
        <strain>ATCC 35061 / DSM 861 / OCM 144 / PS</strain>
    </source>
</reference>
<evidence type="ECO:0000255" key="1">
    <source>
        <dbReference type="HAMAP-Rule" id="MF_00623"/>
    </source>
</evidence>
<evidence type="ECO:0000256" key="2">
    <source>
        <dbReference type="SAM" id="MobiDB-lite"/>
    </source>
</evidence>
<proteinExistence type="inferred from homology"/>
<comment type="function">
    <text evidence="1">Non-catalytic component of the exosome, which is a complex involved in RNA degradation. Increases the RNA binding and the efficiency of RNA degradation. Confers strong poly(A) specificity to the exosome.</text>
</comment>
<comment type="subunit">
    <text evidence="1">Component of the archaeal exosome complex. Forms a trimer of Rrp4 and/or Csl4 subunits. The trimer associates with a hexameric ring-like arrangement composed of 3 Rrp41-Rrp42 heterodimers.</text>
</comment>
<comment type="subcellular location">
    <subcellularLocation>
        <location evidence="1">Cytoplasm</location>
    </subcellularLocation>
</comment>
<comment type="similarity">
    <text evidence="1">Belongs to the RRP4 family.</text>
</comment>
<gene>
    <name evidence="1" type="primary">rrp4</name>
    <name type="ordered locus">Msm_0243</name>
</gene>
<feature type="chain" id="PRO_1000061382" description="Exosome complex component Rrp4">
    <location>
        <begin position="1"/>
        <end position="298"/>
    </location>
</feature>
<feature type="domain" description="S1 motif" evidence="1">
    <location>
        <begin position="63"/>
        <end position="131"/>
    </location>
</feature>
<feature type="domain" description="KH" evidence="1">
    <location>
        <begin position="139"/>
        <end position="197"/>
    </location>
</feature>
<feature type="region of interest" description="Disordered" evidence="2">
    <location>
        <begin position="276"/>
        <end position="298"/>
    </location>
</feature>
<feature type="compositionally biased region" description="Polar residues" evidence="2">
    <location>
        <begin position="285"/>
        <end position="298"/>
    </location>
</feature>
<dbReference type="EMBL" id="CP000678">
    <property type="protein sequence ID" value="ABQ86448.1"/>
    <property type="molecule type" value="Genomic_DNA"/>
</dbReference>
<dbReference type="RefSeq" id="WP_011953778.1">
    <property type="nucleotide sequence ID" value="NZ_CP117965.1"/>
</dbReference>
<dbReference type="SMR" id="A5UJS0"/>
<dbReference type="STRING" id="420247.Msm_0243"/>
<dbReference type="EnsemblBacteria" id="ABQ86448">
    <property type="protein sequence ID" value="ABQ86448"/>
    <property type="gene ID" value="Msm_0243"/>
</dbReference>
<dbReference type="GeneID" id="78816866"/>
<dbReference type="KEGG" id="msi:Msm_0243"/>
<dbReference type="PATRIC" id="fig|420247.28.peg.246"/>
<dbReference type="eggNOG" id="arCOG00678">
    <property type="taxonomic scope" value="Archaea"/>
</dbReference>
<dbReference type="HOGENOM" id="CLU_071769_0_0_2"/>
<dbReference type="Proteomes" id="UP000001992">
    <property type="component" value="Chromosome"/>
</dbReference>
<dbReference type="GO" id="GO:0005737">
    <property type="term" value="C:cytoplasm"/>
    <property type="evidence" value="ECO:0007669"/>
    <property type="project" value="UniProtKB-SubCell"/>
</dbReference>
<dbReference type="GO" id="GO:0000178">
    <property type="term" value="C:exosome (RNase complex)"/>
    <property type="evidence" value="ECO:0007669"/>
    <property type="project" value="UniProtKB-KW"/>
</dbReference>
<dbReference type="GO" id="GO:0008143">
    <property type="term" value="F:poly(A) binding"/>
    <property type="evidence" value="ECO:0007669"/>
    <property type="project" value="InterPro"/>
</dbReference>
<dbReference type="GO" id="GO:0071034">
    <property type="term" value="P:CUT catabolic process"/>
    <property type="evidence" value="ECO:0007669"/>
    <property type="project" value="TreeGrafter"/>
</dbReference>
<dbReference type="GO" id="GO:0000467">
    <property type="term" value="P:exonucleolytic trimming to generate mature 3'-end of 5.8S rRNA from tricistronic rRNA transcript (SSU-rRNA, 5.8S rRNA, LSU-rRNA)"/>
    <property type="evidence" value="ECO:0007669"/>
    <property type="project" value="TreeGrafter"/>
</dbReference>
<dbReference type="GO" id="GO:0071051">
    <property type="term" value="P:poly(A)-dependent snoRNA 3'-end processing"/>
    <property type="evidence" value="ECO:0007669"/>
    <property type="project" value="TreeGrafter"/>
</dbReference>
<dbReference type="GO" id="GO:0006401">
    <property type="term" value="P:RNA catabolic process"/>
    <property type="evidence" value="ECO:0007669"/>
    <property type="project" value="UniProtKB-UniRule"/>
</dbReference>
<dbReference type="GO" id="GO:0034475">
    <property type="term" value="P:U4 snRNA 3'-end processing"/>
    <property type="evidence" value="ECO:0007669"/>
    <property type="project" value="TreeGrafter"/>
</dbReference>
<dbReference type="CDD" id="cd22524">
    <property type="entry name" value="KH-I_Rrp4_prokar"/>
    <property type="match status" value="1"/>
</dbReference>
<dbReference type="CDD" id="cd05789">
    <property type="entry name" value="S1_Rrp4"/>
    <property type="match status" value="1"/>
</dbReference>
<dbReference type="Gene3D" id="2.40.50.100">
    <property type="match status" value="1"/>
</dbReference>
<dbReference type="Gene3D" id="3.30.1370.10">
    <property type="entry name" value="K Homology domain, type 1"/>
    <property type="match status" value="1"/>
</dbReference>
<dbReference type="Gene3D" id="2.40.50.140">
    <property type="entry name" value="Nucleic acid-binding proteins"/>
    <property type="match status" value="1"/>
</dbReference>
<dbReference type="HAMAP" id="MF_00623">
    <property type="entry name" value="Exosome_Rrp4"/>
    <property type="match status" value="1"/>
</dbReference>
<dbReference type="InterPro" id="IPR026699">
    <property type="entry name" value="Exosome_RNA_bind1/RRP40/RRP4"/>
</dbReference>
<dbReference type="InterPro" id="IPR004087">
    <property type="entry name" value="KH_dom"/>
</dbReference>
<dbReference type="InterPro" id="IPR004088">
    <property type="entry name" value="KH_dom_type_1"/>
</dbReference>
<dbReference type="InterPro" id="IPR036612">
    <property type="entry name" value="KH_dom_type_1_sf"/>
</dbReference>
<dbReference type="InterPro" id="IPR012340">
    <property type="entry name" value="NA-bd_OB-fold"/>
</dbReference>
<dbReference type="InterPro" id="IPR023474">
    <property type="entry name" value="Rrp4"/>
</dbReference>
<dbReference type="InterPro" id="IPR054371">
    <property type="entry name" value="RRP4_N"/>
</dbReference>
<dbReference type="InterPro" id="IPR048565">
    <property type="entry name" value="RRP4_S1"/>
</dbReference>
<dbReference type="InterPro" id="IPR003029">
    <property type="entry name" value="S1_domain"/>
</dbReference>
<dbReference type="NCBIfam" id="NF003181">
    <property type="entry name" value="PRK04163.1-1"/>
    <property type="match status" value="1"/>
</dbReference>
<dbReference type="PANTHER" id="PTHR21321:SF4">
    <property type="entry name" value="EXOSOME COMPLEX COMPONENT RRP4"/>
    <property type="match status" value="1"/>
</dbReference>
<dbReference type="PANTHER" id="PTHR21321">
    <property type="entry name" value="PNAS-3 RELATED"/>
    <property type="match status" value="1"/>
</dbReference>
<dbReference type="Pfam" id="PF22625">
    <property type="entry name" value="ECR1_N_2"/>
    <property type="match status" value="1"/>
</dbReference>
<dbReference type="Pfam" id="PF15985">
    <property type="entry name" value="KH_6"/>
    <property type="match status" value="1"/>
</dbReference>
<dbReference type="Pfam" id="PF21266">
    <property type="entry name" value="RRP4_S1"/>
    <property type="match status" value="1"/>
</dbReference>
<dbReference type="SMART" id="SM00322">
    <property type="entry name" value="KH"/>
    <property type="match status" value="1"/>
</dbReference>
<dbReference type="SMART" id="SM00316">
    <property type="entry name" value="S1"/>
    <property type="match status" value="1"/>
</dbReference>
<dbReference type="SUPFAM" id="SSF54791">
    <property type="entry name" value="Eukaryotic type KH-domain (KH-domain type I)"/>
    <property type="match status" value="1"/>
</dbReference>
<dbReference type="SUPFAM" id="SSF50249">
    <property type="entry name" value="Nucleic acid-binding proteins"/>
    <property type="match status" value="1"/>
</dbReference>
<dbReference type="SUPFAM" id="SSF110324">
    <property type="entry name" value="Ribosomal L27 protein-like"/>
    <property type="match status" value="1"/>
</dbReference>
<dbReference type="PROSITE" id="PS50084">
    <property type="entry name" value="KH_TYPE_1"/>
    <property type="match status" value="1"/>
</dbReference>
<dbReference type="PROSITE" id="PS50126">
    <property type="entry name" value="S1"/>
    <property type="match status" value="1"/>
</dbReference>
<accession>A5UJS0</accession>
<keyword id="KW-0963">Cytoplasm</keyword>
<keyword id="KW-0271">Exosome</keyword>
<keyword id="KW-0694">RNA-binding</keyword>
<protein>
    <recommendedName>
        <fullName evidence="1">Exosome complex component Rrp4</fullName>
    </recommendedName>
</protein>
<sequence>MIYVENKDLVIPGEVLADDEYYSGRGTFKENGKICSSLMGLVSLRNKKIRVIPLKSKYVPKKGDVVIGKIKDVRFSMWDVDINSPYSGILPAFEVFGREKKELNKVFDVGDVLFLRVVDVDEVKKVKLGLKGRGMGKFRGGIIVDITPTKVPRLIGKKGSMINMIKDKTNCKIIVGQNGLVWVKGEEDMEQLTKDIIHMIEAEAHTSGLTNKVKNKLSLAIDGELPQEDDYSDDYEELEKPKLQNFKEELEQEEKEEQSKKDSTDFYKVIEELKKKNKKDKPLSYGNNSGNSYILNNR</sequence>
<organism>
    <name type="scientific">Methanobrevibacter smithii (strain ATCC 35061 / DSM 861 / OCM 144 / PS)</name>
    <dbReference type="NCBI Taxonomy" id="420247"/>
    <lineage>
        <taxon>Archaea</taxon>
        <taxon>Methanobacteriati</taxon>
        <taxon>Methanobacteriota</taxon>
        <taxon>Methanomada group</taxon>
        <taxon>Methanobacteria</taxon>
        <taxon>Methanobacteriales</taxon>
        <taxon>Methanobacteriaceae</taxon>
        <taxon>Methanobrevibacter</taxon>
    </lineage>
</organism>